<reference key="1">
    <citation type="submission" date="2000-02" db="EMBL/GenBank/DDBJ databases">
        <title>Long branches in the seed plants and the root of the angiosperms.</title>
        <authorList>
            <person name="Graham S.W."/>
            <person name="Reeves P.A."/>
            <person name="Burns A."/>
            <person name="Olmstead R.G."/>
        </authorList>
    </citation>
    <scope>NUCLEOTIDE SEQUENCE [GENOMIC DNA]</scope>
</reference>
<accession>Q8HS16</accession>
<keyword id="KW-0150">Chloroplast</keyword>
<keyword id="KW-0472">Membrane</keyword>
<keyword id="KW-0602">Photosynthesis</keyword>
<keyword id="KW-0604">Photosystem II</keyword>
<keyword id="KW-0934">Plastid</keyword>
<keyword id="KW-0793">Thylakoid</keyword>
<keyword id="KW-0812">Transmembrane</keyword>
<keyword id="KW-1133">Transmembrane helix</keyword>
<proteinExistence type="inferred from homology"/>
<name>PSBT_SCHCH</name>
<protein>
    <recommendedName>
        <fullName evidence="1">Photosystem II reaction center protein T</fullName>
        <shortName evidence="1">PSII-T</shortName>
    </recommendedName>
</protein>
<comment type="function">
    <text evidence="1">Found at the monomer-monomer interface of the photosystem II (PS II) dimer, plays a role in assembly and dimerization of PSII. PSII is a light-driven water plastoquinone oxidoreductase, using light energy to abstract electrons from H(2)O, generating a proton gradient subsequently used for ATP formation.</text>
</comment>
<comment type="subunit">
    <text evidence="1">PSII is composed of 1 copy each of membrane proteins PsbA, PsbB, PsbC, PsbD, PsbE, PsbF, PsbH, PsbI, PsbJ, PsbK, PsbL, PsbM, PsbT, PsbY, PsbZ, Psb30/Ycf12, at least 3 peripheral proteins of the oxygen-evolving complex and a large number of cofactors. It forms dimeric complexes.</text>
</comment>
<comment type="subcellular location">
    <subcellularLocation>
        <location evidence="1">Plastid</location>
        <location evidence="1">Chloroplast thylakoid membrane</location>
        <topology evidence="1">Single-pass membrane protein</topology>
    </subcellularLocation>
</comment>
<comment type="similarity">
    <text evidence="1">Belongs to the PsbT family.</text>
</comment>
<geneLocation type="chloroplast"/>
<evidence type="ECO:0000255" key="1">
    <source>
        <dbReference type="HAMAP-Rule" id="MF_00808"/>
    </source>
</evidence>
<organism>
    <name type="scientific">Schisandra chinensis</name>
    <name type="common">Chinese magnolia vine</name>
    <name type="synonym">Kadsura chinensis</name>
    <dbReference type="NCBI Taxonomy" id="50507"/>
    <lineage>
        <taxon>Eukaryota</taxon>
        <taxon>Viridiplantae</taxon>
        <taxon>Streptophyta</taxon>
        <taxon>Embryophyta</taxon>
        <taxon>Tracheophyta</taxon>
        <taxon>Spermatophyta</taxon>
        <taxon>Magnoliopsida</taxon>
        <taxon>Austrobaileyales</taxon>
        <taxon>Schisandraceae</taxon>
        <taxon>Schisandra</taxon>
    </lineage>
</organism>
<gene>
    <name evidence="1" type="primary">psbT</name>
</gene>
<dbReference type="EMBL" id="AY007470">
    <property type="protein sequence ID" value="AAG12392.1"/>
    <property type="molecule type" value="Genomic_DNA"/>
</dbReference>
<dbReference type="RefSeq" id="YP_009378440.1">
    <property type="nucleotide sequence ID" value="NC_034908.1"/>
</dbReference>
<dbReference type="SMR" id="Q8HS16"/>
<dbReference type="GeneID" id="32956282"/>
<dbReference type="GO" id="GO:0009535">
    <property type="term" value="C:chloroplast thylakoid membrane"/>
    <property type="evidence" value="ECO:0007669"/>
    <property type="project" value="UniProtKB-SubCell"/>
</dbReference>
<dbReference type="GO" id="GO:0009539">
    <property type="term" value="C:photosystem II reaction center"/>
    <property type="evidence" value="ECO:0007669"/>
    <property type="project" value="InterPro"/>
</dbReference>
<dbReference type="GO" id="GO:0015979">
    <property type="term" value="P:photosynthesis"/>
    <property type="evidence" value="ECO:0007669"/>
    <property type="project" value="UniProtKB-UniRule"/>
</dbReference>
<dbReference type="HAMAP" id="MF_00808">
    <property type="entry name" value="PSII_PsbT"/>
    <property type="match status" value="1"/>
</dbReference>
<dbReference type="InterPro" id="IPR001743">
    <property type="entry name" value="PSII_PsbT"/>
</dbReference>
<dbReference type="InterPro" id="IPR037268">
    <property type="entry name" value="PSII_PsbT_sf"/>
</dbReference>
<dbReference type="PANTHER" id="PTHR36411">
    <property type="match status" value="1"/>
</dbReference>
<dbReference type="PANTHER" id="PTHR36411:SF2">
    <property type="entry name" value="PHOTOSYSTEM II REACTION CENTER PROTEIN T"/>
    <property type="match status" value="1"/>
</dbReference>
<dbReference type="Pfam" id="PF01405">
    <property type="entry name" value="PsbT"/>
    <property type="match status" value="1"/>
</dbReference>
<dbReference type="SUPFAM" id="SSF161029">
    <property type="entry name" value="Photosystem II reaction center protein T, PsbT"/>
    <property type="match status" value="1"/>
</dbReference>
<sequence>MEALVYTFLLVSTLGIIFFAIFFREPPKVPNKKMK</sequence>
<feature type="chain" id="PRO_0000217980" description="Photosystem II reaction center protein T">
    <location>
        <begin position="1"/>
        <end position="35"/>
    </location>
</feature>
<feature type="transmembrane region" description="Helical" evidence="1">
    <location>
        <begin position="3"/>
        <end position="23"/>
    </location>
</feature>